<comment type="function">
    <text evidence="6 8 11">The main replicative DNA helicase, it participates in initiation and elongation during chromosome replication. Travels ahead of the DNA replisome, separating dsDNA into templates for DNA synthesis. A processive ATP-dependent 5'-3' DNA helicase that acts on preformed replication forks (have single-stranded (ss)DNA tails) (PubMed:3007474). ATP is the best nucleotide for helicase activity; GTP, CTP, dCTP and dATP are poor substitutes (PubMed:3007474). Participates with DNA primase DnaG in primer RNA (pRNA) synthesis during initiation of DNA replication (PubMed:7532169). Has DNA-dependent ATPase activity (PubMed:7532169). Is loaded onto ssDNA via the action of DnaC; ssDNA binds to the central pore in the DnaB(6):DnaC(6) complex, making contacts with both subunits (PubMed:30797687). Required for restart of stalled replication forks, which reloads the DnaB replicative helicase on sites other than the origin of replication (PubMed:6454139, PubMed:8663104, PubMed:8663105).</text>
</comment>
<comment type="function">
    <text evidence="4">Deletion or mutations in this gene were selected in directed evolution experiments for resistance to intense ionizing radiation (3000 Gy) (PubMed:24596148).</text>
</comment>
<comment type="catalytic activity">
    <reaction evidence="6 11">
        <text>Couples ATP hydrolysis with the unwinding of duplex DNA at the replication fork by translocating in the 5'-3' direction. This creates two antiparallel DNA single strands (ssDNA). The leading ssDNA polymer is the template for DNA polymerase III holoenzyme which synthesizes a continuous strand.</text>
        <dbReference type="EC" id="5.6.2.3"/>
    </reaction>
</comment>
<comment type="catalytic activity">
    <reaction evidence="11">
        <text>ATP + H2O = ADP + phosphate + H(+)</text>
        <dbReference type="Rhea" id="RHEA:13065"/>
        <dbReference type="ChEBI" id="CHEBI:15377"/>
        <dbReference type="ChEBI" id="CHEBI:15378"/>
        <dbReference type="ChEBI" id="CHEBI:30616"/>
        <dbReference type="ChEBI" id="CHEBI:43474"/>
        <dbReference type="ChEBI" id="CHEBI:456216"/>
        <dbReference type="EC" id="5.6.2.3"/>
    </reaction>
</comment>
<comment type="cofactor">
    <cofactor evidence="7 12">
        <name>Mg(2+)</name>
        <dbReference type="ChEBI" id="CHEBI:18420"/>
    </cofactor>
    <text evidence="12">Hexameric enzyme depends on Mg(2+); in its absence, DnaB is trimeric (PubMed:7989299).</text>
</comment>
<comment type="activity regulation">
    <text evidence="6">5'-3' DNA helicase activity is stimulated 2-fold by single-stranded binding protein (SSB) and 6-fold by SSB and DnaG primase (PubMed:3007474).</text>
</comment>
<comment type="subunit">
    <text evidence="5 7 8 10 12 13 14">Homohexamer ring (PubMed:30582519, PubMed:7989299). The helix loader is a DnaB(6):DnaC(6) complex with a cracked opening large enough to allow ssDNA into the central cavity (PubMed:30797687). Component of the replication restart primosome, which is composed of PriA, PriB, PriC, DnaB and DnaT; DnaC is required to load the helicase on the replication fork DNA while DnaG primase associates transiently with this complex (PubMed:6454139, PubMed:8663104, PubMed:8663105). Interacts with PriC alone and in the DnaB-DnaC complex, probably 1:1 binding with PriC (PubMed:27382050).</text>
</comment>
<comment type="subunit">
    <text evidence="7">(Microbial infection) Forms a DnaB(6):lambda P(5) complex in the presence of ssDNA (PubMed:30582519). Lambda P helicase loader reconfigures the DnaB hexameric ring, generating an opening large enough to permit ssDNA into the central channel (PubMed:30582519).</text>
</comment>
<comment type="interaction">
    <interactant intactId="EBI-548978">
        <id>P0ACB0</id>
    </interactant>
    <interactant intactId="EBI-548951">
        <id>P03004</id>
        <label>dnaA</label>
    </interactant>
    <organismsDiffer>false</organismsDiffer>
    <experiments>4</experiments>
</comment>
<comment type="interaction">
    <interactant intactId="EBI-548978">
        <id>P0ACB0</id>
    </interactant>
    <interactant intactId="EBI-548978">
        <id>P0ACB0</id>
        <label>dnaB</label>
    </interactant>
    <organismsDiffer>false</organismsDiffer>
    <experiments>6</experiments>
</comment>
<comment type="interaction">
    <interactant intactId="EBI-548978">
        <id>P0ACB0</id>
    </interactant>
    <interactant intactId="EBI-549012">
        <id>P0AEF0</id>
        <label>dnaC</label>
    </interactant>
    <organismsDiffer>false</organismsDiffer>
    <experiments>12</experiments>
</comment>
<comment type="interaction">
    <interactant intactId="EBI-548978">
        <id>P0ACB0</id>
    </interactant>
    <interactant intactId="EBI-549259">
        <id>P0ABS5</id>
        <label>dnaG</label>
    </interactant>
    <organismsDiffer>false</organismsDiffer>
    <experiments>3</experiments>
</comment>
<comment type="interaction">
    <interactant intactId="EBI-548978">
        <id>P0ACB0</id>
    </interactant>
    <interactant intactId="EBI-549140">
        <id>P06710</id>
        <label>dnaX</label>
    </interactant>
    <organismsDiffer>false</organismsDiffer>
    <experiments>2</experiments>
</comment>
<comment type="interaction">
    <interactant intactId="EBI-548978">
        <id>P0ACB0</id>
    </interactant>
    <interactant intactId="EBI-1117383">
        <id>P23862</id>
        <label>priC</label>
    </interactant>
    <organismsDiffer>false</organismsDiffer>
    <experiments>5</experiments>
</comment>
<comment type="interaction">
    <interactant intactId="EBI-548978">
        <id>P0ACB0</id>
    </interactant>
    <interactant intactId="EBI-6558011">
        <id>P09980</id>
        <label>rep</label>
    </interactant>
    <organismsDiffer>false</organismsDiffer>
    <experiments>3</experiments>
</comment>
<comment type="induction">
    <text evidence="3">Slightly induced by hydroxyurea.</text>
</comment>
<comment type="domain">
    <text evidence="8">Loader protein DnaC alters the inter-domain and inter-subunit interactions of DnaB, inducing an open ring conformation that allows ssDNA to access the interior of the DnaB(6)DnaC(6) ring (PubMed:30797687).</text>
</comment>
<comment type="similarity">
    <text evidence="17">Belongs to the helicase family. DnaB subfamily.</text>
</comment>
<evidence type="ECO:0000255" key="1">
    <source>
        <dbReference type="PROSITE-ProRule" id="PRU00596"/>
    </source>
</evidence>
<evidence type="ECO:0000256" key="2">
    <source>
        <dbReference type="SAM" id="MobiDB-lite"/>
    </source>
</evidence>
<evidence type="ECO:0000269" key="3">
    <source>
    </source>
</evidence>
<evidence type="ECO:0000269" key="4">
    <source>
    </source>
</evidence>
<evidence type="ECO:0000269" key="5">
    <source>
    </source>
</evidence>
<evidence type="ECO:0000269" key="6">
    <source>
    </source>
</evidence>
<evidence type="ECO:0000269" key="7">
    <source>
    </source>
</evidence>
<evidence type="ECO:0000269" key="8">
    <source>
    </source>
</evidence>
<evidence type="ECO:0000269" key="9">
    <source>
    </source>
</evidence>
<evidence type="ECO:0000269" key="10">
    <source>
    </source>
</evidence>
<evidence type="ECO:0000269" key="11">
    <source>
    </source>
</evidence>
<evidence type="ECO:0000269" key="12">
    <source>
    </source>
</evidence>
<evidence type="ECO:0000269" key="13">
    <source>
    </source>
</evidence>
<evidence type="ECO:0000269" key="14">
    <source>
    </source>
</evidence>
<evidence type="ECO:0000303" key="15">
    <source>
    </source>
</evidence>
<evidence type="ECO:0000303" key="16">
    <source>
    </source>
</evidence>
<evidence type="ECO:0000305" key="17"/>
<evidence type="ECO:0000305" key="18">
    <source>
    </source>
</evidence>
<evidence type="ECO:0007744" key="19">
    <source>
        <dbReference type="PDB" id="1JWE"/>
    </source>
</evidence>
<evidence type="ECO:0007744" key="20">
    <source>
        <dbReference type="PDB" id="6BBM"/>
    </source>
</evidence>
<evidence type="ECO:0007744" key="21">
    <source>
        <dbReference type="PDB" id="6QEL"/>
    </source>
</evidence>
<evidence type="ECO:0007744" key="22">
    <source>
        <dbReference type="PDB" id="6QEM"/>
    </source>
</evidence>
<evidence type="ECO:0007744" key="23">
    <source>
        <dbReference type="PDB" id="7T20"/>
    </source>
</evidence>
<evidence type="ECO:0007744" key="24">
    <source>
        <dbReference type="PDB" id="7T21"/>
    </source>
</evidence>
<evidence type="ECO:0007744" key="25">
    <source>
        <dbReference type="PDB" id="7T22"/>
    </source>
</evidence>
<evidence type="ECO:0007744" key="26">
    <source>
        <dbReference type="PDB" id="9ECO"/>
    </source>
</evidence>
<evidence type="ECO:0007829" key="27">
    <source>
        <dbReference type="PDB" id="1B79"/>
    </source>
</evidence>
<evidence type="ECO:0007829" key="28">
    <source>
        <dbReference type="PDB" id="6KZA"/>
    </source>
</evidence>
<evidence type="ECO:0007829" key="29">
    <source>
        <dbReference type="PDB" id="6QEM"/>
    </source>
</evidence>
<feature type="initiator methionine" description="Removed" evidence="9">
    <location>
        <position position="1"/>
    </location>
</feature>
<feature type="chain" id="PRO_0000102019" description="Replicative DNA helicase DnaB">
    <location>
        <begin position="2"/>
        <end position="471"/>
    </location>
</feature>
<feature type="domain" description="SF4 helicase" evidence="1">
    <location>
        <begin position="200"/>
        <end position="467"/>
    </location>
</feature>
<feature type="region of interest" description="Disordered" evidence="2">
    <location>
        <begin position="1"/>
        <end position="27"/>
    </location>
</feature>
<feature type="binding site" evidence="18 20">
    <location>
        <position position="234"/>
    </location>
    <ligand>
        <name>ATP</name>
        <dbReference type="ChEBI" id="CHEBI:30616"/>
    </ligand>
</feature>
<feature type="binding site" evidence="18 20">
    <location>
        <position position="237"/>
    </location>
    <ligand>
        <name>ATP</name>
        <dbReference type="ChEBI" id="CHEBI:30616"/>
    </ligand>
</feature>
<feature type="binding site" evidence="18 20">
    <location>
        <position position="238"/>
    </location>
    <ligand>
        <name>ATP</name>
        <dbReference type="ChEBI" id="CHEBI:30616"/>
    </ligand>
</feature>
<feature type="binding site" evidence="18 20">
    <location>
        <position position="442"/>
    </location>
    <ligand>
        <name>ATP</name>
        <dbReference type="ChEBI" id="CHEBI:30616"/>
    </ligand>
</feature>
<feature type="mutagenesis site" description="About 100-fold increased survival following 3000 Gy ionizing radiation." evidence="4">
    <original>P</original>
    <variation>H</variation>
    <location>
        <position position="81"/>
    </location>
</feature>
<feature type="mutagenesis site" description="In dnaB8, dnaB43, dnaB454; temperature sensitive, no DNA replication at 42 degrees Celsius in vivo, in vitro decreased helicase activity at 30, at 42 degrees Celius almost no helicase, no synthesis of primer RNA (pRNA), low ATPase activity, still binds ssDNA." evidence="11">
    <original>A</original>
    <variation>V</variation>
    <location>
        <position position="130"/>
    </location>
</feature>
<feature type="mutagenesis site" description="In dnaB70; temperature sensitive, no DNA replication at 42 degrees Celsius in vivo, in vitro 25% helicase activity at 30, further decreased helicase at 42 degrees Celius, low ATPase activity at 30 and 42 degrees Celsius, reduced synthesis of pRNA at 30, no pRNA synthesis at 42 degrees Celsius." evidence="11">
    <original>M</original>
    <variation>I</variation>
    <location>
        <position position="242"/>
    </location>
</feature>
<feature type="mutagenesis site" description="In dnaB252; temperature sensitive, no DNA replication at 42 degrees Celsius in vivo, in vitro no change in pRNA synthesis, 5'-3' helicase activity or ATPase at either temperature." evidence="11">
    <original>G</original>
    <variation>D</variation>
    <location>
        <position position="299"/>
    </location>
</feature>
<feature type="helix" evidence="27">
    <location>
        <begin position="30"/>
        <end position="43"/>
    </location>
</feature>
<feature type="helix" evidence="27">
    <location>
        <begin position="45"/>
        <end position="47"/>
    </location>
</feature>
<feature type="helix" evidence="27">
    <location>
        <begin position="48"/>
        <end position="52"/>
    </location>
</feature>
<feature type="helix" evidence="27">
    <location>
        <begin position="57"/>
        <end position="59"/>
    </location>
</feature>
<feature type="strand" evidence="27">
    <location>
        <begin position="60"/>
        <end position="62"/>
    </location>
</feature>
<feature type="helix" evidence="27">
    <location>
        <begin position="63"/>
        <end position="77"/>
    </location>
</feature>
<feature type="helix" evidence="27">
    <location>
        <begin position="84"/>
        <end position="92"/>
    </location>
</feature>
<feature type="turn" evidence="27">
    <location>
        <begin position="93"/>
        <end position="96"/>
    </location>
</feature>
<feature type="helix" evidence="27">
    <location>
        <begin position="97"/>
        <end position="100"/>
    </location>
</feature>
<feature type="helix" evidence="27">
    <location>
        <begin position="102"/>
        <end position="112"/>
    </location>
</feature>
<feature type="strand" evidence="27">
    <location>
        <begin position="115"/>
        <end position="117"/>
    </location>
</feature>
<feature type="helix" evidence="27">
    <location>
        <begin position="119"/>
        <end position="127"/>
    </location>
</feature>
<feature type="helix" evidence="29">
    <location>
        <begin position="155"/>
        <end position="170"/>
    </location>
</feature>
<feature type="strand" evidence="29">
    <location>
        <begin position="176"/>
        <end position="178"/>
    </location>
</feature>
<feature type="helix" evidence="28">
    <location>
        <begin position="182"/>
        <end position="197"/>
    </location>
</feature>
<feature type="strand" evidence="28">
    <location>
        <begin position="205"/>
        <end position="207"/>
    </location>
</feature>
<feature type="helix" evidence="28">
    <location>
        <begin position="212"/>
        <end position="218"/>
    </location>
</feature>
<feature type="strand" evidence="28">
    <location>
        <begin position="219"/>
        <end position="221"/>
    </location>
</feature>
<feature type="strand" evidence="28">
    <location>
        <begin position="226"/>
        <end position="230"/>
    </location>
</feature>
<feature type="helix" evidence="29">
    <location>
        <begin position="233"/>
        <end position="235"/>
    </location>
</feature>
<feature type="helix" evidence="28">
    <location>
        <begin position="237"/>
        <end position="250"/>
    </location>
</feature>
<feature type="strand" evidence="28">
    <location>
        <begin position="256"/>
        <end position="259"/>
    </location>
</feature>
<feature type="strand" evidence="28">
    <location>
        <begin position="261"/>
        <end position="263"/>
    </location>
</feature>
<feature type="helix" evidence="28">
    <location>
        <begin position="265"/>
        <end position="277"/>
    </location>
</feature>
<feature type="helix" evidence="28">
    <location>
        <begin position="281"/>
        <end position="285"/>
    </location>
</feature>
<feature type="helix" evidence="28">
    <location>
        <begin position="291"/>
        <end position="307"/>
    </location>
</feature>
<feature type="strand" evidence="28">
    <location>
        <begin position="310"/>
        <end position="313"/>
    </location>
</feature>
<feature type="helix" evidence="28">
    <location>
        <begin position="320"/>
        <end position="333"/>
    </location>
</feature>
<feature type="strand" evidence="28">
    <location>
        <begin position="338"/>
        <end position="343"/>
    </location>
</feature>
<feature type="helix" evidence="28">
    <location>
        <begin position="345"/>
        <end position="347"/>
    </location>
</feature>
<feature type="helix" evidence="28">
    <location>
        <begin position="351"/>
        <end position="353"/>
    </location>
</feature>
<feature type="helix" evidence="28">
    <location>
        <begin position="357"/>
        <end position="374"/>
    </location>
</feature>
<feature type="strand" evidence="28">
    <location>
        <begin position="379"/>
        <end position="383"/>
    </location>
</feature>
<feature type="helix" evidence="28">
    <location>
        <begin position="387"/>
        <end position="391"/>
    </location>
</feature>
<feature type="strand" evidence="28">
    <location>
        <begin position="392"/>
        <end position="394"/>
    </location>
</feature>
<feature type="helix" evidence="28">
    <location>
        <begin position="399"/>
        <end position="402"/>
    </location>
</feature>
<feature type="turn" evidence="28">
    <location>
        <begin position="403"/>
        <end position="405"/>
    </location>
</feature>
<feature type="helix" evidence="28">
    <location>
        <begin position="408"/>
        <end position="411"/>
    </location>
</feature>
<feature type="strand" evidence="28">
    <location>
        <begin position="413"/>
        <end position="419"/>
    </location>
</feature>
<feature type="helix" evidence="28">
    <location>
        <begin position="421"/>
        <end position="424"/>
    </location>
</feature>
<feature type="strand" evidence="28">
    <location>
        <begin position="431"/>
        <end position="444"/>
    </location>
</feature>
<feature type="strand" evidence="28">
    <location>
        <begin position="447"/>
        <end position="454"/>
    </location>
</feature>
<feature type="turn" evidence="28">
    <location>
        <begin position="455"/>
        <end position="458"/>
    </location>
</feature>
<feature type="strand" evidence="28">
    <location>
        <begin position="459"/>
        <end position="462"/>
    </location>
</feature>
<dbReference type="EC" id="5.6.2.3" evidence="6 11"/>
<dbReference type="EMBL" id="K01174">
    <property type="protein sequence ID" value="AAA23689.1"/>
    <property type="molecule type" value="Genomic_DNA"/>
</dbReference>
<dbReference type="EMBL" id="L02312">
    <property type="protein sequence ID" value="AAA23690.1"/>
    <property type="molecule type" value="Genomic_DNA"/>
</dbReference>
<dbReference type="EMBL" id="U00006">
    <property type="protein sequence ID" value="AAC43146.1"/>
    <property type="molecule type" value="Genomic_DNA"/>
</dbReference>
<dbReference type="EMBL" id="U00096">
    <property type="protein sequence ID" value="AAC77022.1"/>
    <property type="molecule type" value="Genomic_DNA"/>
</dbReference>
<dbReference type="EMBL" id="AP009048">
    <property type="protein sequence ID" value="BAE78054.1"/>
    <property type="molecule type" value="Genomic_DNA"/>
</dbReference>
<dbReference type="PIR" id="C65213">
    <property type="entry name" value="IQECDB"/>
</dbReference>
<dbReference type="RefSeq" id="NP_418476.1">
    <property type="nucleotide sequence ID" value="NC_000913.3"/>
</dbReference>
<dbReference type="RefSeq" id="WP_000918363.1">
    <property type="nucleotide sequence ID" value="NZ_STEB01000022.1"/>
</dbReference>
<dbReference type="PDB" id="1B79">
    <property type="method" value="X-ray"/>
    <property type="resolution" value="2.30 A"/>
    <property type="chains" value="A/B/C/D=16-129"/>
</dbReference>
<dbReference type="PDB" id="1JWE">
    <property type="method" value="NMR"/>
    <property type="chains" value="A=24-137"/>
</dbReference>
<dbReference type="PDB" id="6BBM">
    <property type="method" value="EM"/>
    <property type="resolution" value="4.10 A"/>
    <property type="chains" value="A/B/C/D/E/F=1-471"/>
</dbReference>
<dbReference type="PDB" id="6KZA">
    <property type="method" value="X-ray"/>
    <property type="resolution" value="3.10 A"/>
    <property type="chains" value="A/B=180-471"/>
</dbReference>
<dbReference type="PDB" id="6QEL">
    <property type="method" value="EM"/>
    <property type="resolution" value="3.90 A"/>
    <property type="chains" value="A/B/C/D/E/F=1-471"/>
</dbReference>
<dbReference type="PDB" id="6QEM">
    <property type="method" value="EM"/>
    <property type="resolution" value="3.40 A"/>
    <property type="chains" value="A/B/C/D/E/F=1-471"/>
</dbReference>
<dbReference type="PDB" id="7T20">
    <property type="method" value="EM"/>
    <property type="resolution" value="4.70 A"/>
    <property type="chains" value="A/B/C/D/E/F=24-471"/>
</dbReference>
<dbReference type="PDB" id="7T21">
    <property type="method" value="EM"/>
    <property type="resolution" value="5.40 A"/>
    <property type="chains" value="A/B/C/D/E/F=24-471"/>
</dbReference>
<dbReference type="PDB" id="7T22">
    <property type="method" value="EM"/>
    <property type="resolution" value="4.20 A"/>
    <property type="chains" value="A/B/C/D/E/F=24-471"/>
</dbReference>
<dbReference type="PDB" id="9ECO">
    <property type="method" value="EM"/>
    <property type="resolution" value="4.20 A"/>
    <property type="chains" value="A/B/C/D/E/F=24-471"/>
</dbReference>
<dbReference type="PDBsum" id="1B79"/>
<dbReference type="PDBsum" id="1JWE"/>
<dbReference type="PDBsum" id="6BBM"/>
<dbReference type="PDBsum" id="6KZA"/>
<dbReference type="PDBsum" id="6QEL"/>
<dbReference type="PDBsum" id="6QEM"/>
<dbReference type="PDBsum" id="7T20"/>
<dbReference type="PDBsum" id="7T21"/>
<dbReference type="PDBsum" id="7T22"/>
<dbReference type="PDBsum" id="9ECO"/>
<dbReference type="BMRB" id="P0ACB0"/>
<dbReference type="EMDB" id="EMD-2321"/>
<dbReference type="EMDB" id="EMD-2322"/>
<dbReference type="EMDB" id="EMD-25607"/>
<dbReference type="EMDB" id="EMD-25608"/>
<dbReference type="EMDB" id="EMD-25609"/>
<dbReference type="EMDB" id="EMD-25610"/>
<dbReference type="EMDB" id="EMD-4538"/>
<dbReference type="EMDB" id="EMD-47923"/>
<dbReference type="SMR" id="P0ACB0"/>
<dbReference type="BioGRID" id="4261652">
    <property type="interactions" value="186"/>
</dbReference>
<dbReference type="BioGRID" id="852849">
    <property type="interactions" value="4"/>
</dbReference>
<dbReference type="ComplexPortal" id="CPX-1933">
    <property type="entry name" value="DnaB-DnaG primase-helicase complex"/>
</dbReference>
<dbReference type="ComplexPortal" id="CPX-1934">
    <property type="entry name" value="dnaB-dnaC complex"/>
</dbReference>
<dbReference type="ComplexPortal" id="CPX-1946">
    <property type="entry name" value="dnaB helicase complex"/>
</dbReference>
<dbReference type="ComplexPortal" id="CPX-1950">
    <property type="entry name" value="dnaA-dnaB-dnaC loader complex"/>
</dbReference>
<dbReference type="ComplexPortal" id="CPX-1951">
    <property type="entry name" value="Replication restart pre-primosome complex, priAB variant"/>
</dbReference>
<dbReference type="ComplexPortal" id="CPX-1952">
    <property type="entry name" value="Replication restart pre-primosome complex, priAC variant"/>
</dbReference>
<dbReference type="ComplexPortal" id="CPX-1953">
    <property type="entry name" value="Replication restart pre-primosome complex priC-rep variant"/>
</dbReference>
<dbReference type="ComplexPortal" id="CPX-5909">
    <property type="entry name" value="Replication restart primosome complex, priAC variant"/>
</dbReference>
<dbReference type="ComplexPortal" id="CPX-5910">
    <property type="entry name" value="Replication restart primosome complex, priAB variant"/>
</dbReference>
<dbReference type="ComplexPortal" id="CPX-5911">
    <property type="entry name" value="Replication restart primosome complex, priC-rep variant"/>
</dbReference>
<dbReference type="DIP" id="DIP-9456N"/>
<dbReference type="FunCoup" id="P0ACB0">
    <property type="interactions" value="318"/>
</dbReference>
<dbReference type="IntAct" id="P0ACB0">
    <property type="interactions" value="39"/>
</dbReference>
<dbReference type="MINT" id="P0ACB0"/>
<dbReference type="STRING" id="511145.b4052"/>
<dbReference type="jPOST" id="P0ACB0"/>
<dbReference type="PaxDb" id="511145-b4052"/>
<dbReference type="EnsemblBacteria" id="AAC77022">
    <property type="protein sequence ID" value="AAC77022"/>
    <property type="gene ID" value="b4052"/>
</dbReference>
<dbReference type="GeneID" id="93777780"/>
<dbReference type="GeneID" id="948555"/>
<dbReference type="KEGG" id="ecj:JW4012"/>
<dbReference type="KEGG" id="eco:b4052"/>
<dbReference type="KEGG" id="ecoc:C3026_21895"/>
<dbReference type="PATRIC" id="fig|1411691.4.peg.2655"/>
<dbReference type="EchoBASE" id="EB0232"/>
<dbReference type="eggNOG" id="COG0305">
    <property type="taxonomic scope" value="Bacteria"/>
</dbReference>
<dbReference type="HOGENOM" id="CLU_005373_0_0_6"/>
<dbReference type="InParanoid" id="P0ACB0"/>
<dbReference type="OMA" id="IEFHARI"/>
<dbReference type="OrthoDB" id="9773982at2"/>
<dbReference type="PhylomeDB" id="P0ACB0"/>
<dbReference type="BioCyc" id="EcoCyc:EG10236-MONOMER"/>
<dbReference type="BioCyc" id="MetaCyc:EG10236-MONOMER"/>
<dbReference type="EvolutionaryTrace" id="P0ACB0"/>
<dbReference type="PRO" id="PR:P0ACB0"/>
<dbReference type="Proteomes" id="UP000000625">
    <property type="component" value="Chromosome"/>
</dbReference>
<dbReference type="GO" id="GO:0005829">
    <property type="term" value="C:cytosol"/>
    <property type="evidence" value="ECO:0000314"/>
    <property type="project" value="EcoCyc"/>
</dbReference>
<dbReference type="GO" id="GO:0033202">
    <property type="term" value="C:DNA helicase complex"/>
    <property type="evidence" value="ECO:0000314"/>
    <property type="project" value="ComplexPortal"/>
</dbReference>
<dbReference type="GO" id="GO:1990100">
    <property type="term" value="C:DnaB-DnaC complex"/>
    <property type="evidence" value="ECO:0000353"/>
    <property type="project" value="ComplexPortal"/>
</dbReference>
<dbReference type="GO" id="GO:1990158">
    <property type="term" value="C:DnaB-DnaC-DnaT-PriA-PriB complex"/>
    <property type="evidence" value="ECO:0000303"/>
    <property type="project" value="ComplexPortal"/>
</dbReference>
<dbReference type="GO" id="GO:1990159">
    <property type="term" value="C:DnaB-DnaC-DnaT-PriA-PriC complex"/>
    <property type="evidence" value="ECO:0000303"/>
    <property type="project" value="ComplexPortal"/>
</dbReference>
<dbReference type="GO" id="GO:1990160">
    <property type="term" value="C:DnaB-DnaC-Rep-PriC complex"/>
    <property type="evidence" value="ECO:0000303"/>
    <property type="project" value="ComplexPortal"/>
</dbReference>
<dbReference type="GO" id="GO:1990156">
    <property type="term" value="C:DnaB-DnaG complex"/>
    <property type="evidence" value="ECO:0000353"/>
    <property type="project" value="ComplexPortal"/>
</dbReference>
<dbReference type="GO" id="GO:1990077">
    <property type="term" value="C:primosome complex"/>
    <property type="evidence" value="ECO:0000303"/>
    <property type="project" value="ComplexPortal"/>
</dbReference>
<dbReference type="GO" id="GO:0030894">
    <property type="term" value="C:replisome"/>
    <property type="evidence" value="ECO:0000303"/>
    <property type="project" value="ComplexPortal"/>
</dbReference>
<dbReference type="GO" id="GO:0043139">
    <property type="term" value="F:5'-3' DNA helicase activity"/>
    <property type="evidence" value="ECO:0000314"/>
    <property type="project" value="UniProtKB"/>
</dbReference>
<dbReference type="GO" id="GO:0005524">
    <property type="term" value="F:ATP binding"/>
    <property type="evidence" value="ECO:0007669"/>
    <property type="project" value="UniProtKB-KW"/>
</dbReference>
<dbReference type="GO" id="GO:0016887">
    <property type="term" value="F:ATP hydrolysis activity"/>
    <property type="evidence" value="ECO:0007669"/>
    <property type="project" value="InterPro"/>
</dbReference>
<dbReference type="GO" id="GO:0003677">
    <property type="term" value="F:DNA binding"/>
    <property type="evidence" value="ECO:0007669"/>
    <property type="project" value="UniProtKB-KW"/>
</dbReference>
<dbReference type="GO" id="GO:0003678">
    <property type="term" value="F:DNA helicase activity"/>
    <property type="evidence" value="ECO:0000314"/>
    <property type="project" value="EcoCyc"/>
</dbReference>
<dbReference type="GO" id="GO:0004386">
    <property type="term" value="F:helicase activity"/>
    <property type="evidence" value="ECO:0000314"/>
    <property type="project" value="EcoCyc"/>
</dbReference>
<dbReference type="GO" id="GO:0042802">
    <property type="term" value="F:identical protein binding"/>
    <property type="evidence" value="ECO:0000353"/>
    <property type="project" value="IntAct"/>
</dbReference>
<dbReference type="GO" id="GO:0006260">
    <property type="term" value="P:DNA replication"/>
    <property type="evidence" value="ECO:0000315"/>
    <property type="project" value="EcoCyc"/>
</dbReference>
<dbReference type="GO" id="GO:0006270">
    <property type="term" value="P:DNA replication initiation"/>
    <property type="evidence" value="ECO:0000314"/>
    <property type="project" value="ComplexPortal"/>
</dbReference>
<dbReference type="GO" id="GO:0006269">
    <property type="term" value="P:DNA replication, synthesis of primer"/>
    <property type="evidence" value="ECO:0000314"/>
    <property type="project" value="ComplexPortal"/>
</dbReference>
<dbReference type="GO" id="GO:0031297">
    <property type="term" value="P:replication fork processing"/>
    <property type="evidence" value="ECO:0000303"/>
    <property type="project" value="ComplexPortal"/>
</dbReference>
<dbReference type="GO" id="GO:0010212">
    <property type="term" value="P:response to ionizing radiation"/>
    <property type="evidence" value="ECO:0000315"/>
    <property type="project" value="EcoCyc"/>
</dbReference>
<dbReference type="CDD" id="cd00984">
    <property type="entry name" value="DnaB_C"/>
    <property type="match status" value="1"/>
</dbReference>
<dbReference type="FunFam" id="1.10.860.10:FF:000002">
    <property type="entry name" value="Replicative DNA helicase"/>
    <property type="match status" value="1"/>
</dbReference>
<dbReference type="FunFam" id="3.40.50.300:FF:000076">
    <property type="entry name" value="Replicative DNA helicase"/>
    <property type="match status" value="1"/>
</dbReference>
<dbReference type="Gene3D" id="1.10.860.10">
    <property type="entry name" value="DNAb Helicase, Chain A"/>
    <property type="match status" value="1"/>
</dbReference>
<dbReference type="Gene3D" id="3.40.50.300">
    <property type="entry name" value="P-loop containing nucleotide triphosphate hydrolases"/>
    <property type="match status" value="1"/>
</dbReference>
<dbReference type="InterPro" id="IPR003593">
    <property type="entry name" value="AAA+_ATPase"/>
</dbReference>
<dbReference type="InterPro" id="IPR036185">
    <property type="entry name" value="DNA_heli_DnaB-like_N_sf"/>
</dbReference>
<dbReference type="InterPro" id="IPR007692">
    <property type="entry name" value="DNA_helicase_DnaB"/>
</dbReference>
<dbReference type="InterPro" id="IPR007694">
    <property type="entry name" value="DNA_helicase_DnaB-like_C"/>
</dbReference>
<dbReference type="InterPro" id="IPR007693">
    <property type="entry name" value="DNA_helicase_DnaB-like_N"/>
</dbReference>
<dbReference type="InterPro" id="IPR016136">
    <property type="entry name" value="DNA_helicase_N/primase_C"/>
</dbReference>
<dbReference type="InterPro" id="IPR027417">
    <property type="entry name" value="P-loop_NTPase"/>
</dbReference>
<dbReference type="NCBIfam" id="TIGR00665">
    <property type="entry name" value="DnaB"/>
    <property type="match status" value="1"/>
</dbReference>
<dbReference type="NCBIfam" id="NF004384">
    <property type="entry name" value="PRK05748.1"/>
    <property type="match status" value="1"/>
</dbReference>
<dbReference type="NCBIfam" id="NF005945">
    <property type="entry name" value="PRK08006.1"/>
    <property type="match status" value="1"/>
</dbReference>
<dbReference type="NCBIfam" id="NF006458">
    <property type="entry name" value="PRK08840.1"/>
    <property type="match status" value="1"/>
</dbReference>
<dbReference type="PANTHER" id="PTHR30153:SF2">
    <property type="entry name" value="REPLICATIVE DNA HELICASE"/>
    <property type="match status" value="1"/>
</dbReference>
<dbReference type="PANTHER" id="PTHR30153">
    <property type="entry name" value="REPLICATIVE DNA HELICASE DNAB"/>
    <property type="match status" value="1"/>
</dbReference>
<dbReference type="Pfam" id="PF00772">
    <property type="entry name" value="DnaB"/>
    <property type="match status" value="1"/>
</dbReference>
<dbReference type="Pfam" id="PF03796">
    <property type="entry name" value="DnaB_C"/>
    <property type="match status" value="1"/>
</dbReference>
<dbReference type="SMART" id="SM00382">
    <property type="entry name" value="AAA"/>
    <property type="match status" value="1"/>
</dbReference>
<dbReference type="SUPFAM" id="SSF48024">
    <property type="entry name" value="N-terminal domain of DnaB helicase"/>
    <property type="match status" value="1"/>
</dbReference>
<dbReference type="SUPFAM" id="SSF52540">
    <property type="entry name" value="P-loop containing nucleoside triphosphate hydrolases"/>
    <property type="match status" value="1"/>
</dbReference>
<dbReference type="PROSITE" id="PS51199">
    <property type="entry name" value="SF4_HELICASE"/>
    <property type="match status" value="1"/>
</dbReference>
<organism>
    <name type="scientific">Escherichia coli (strain K12)</name>
    <dbReference type="NCBI Taxonomy" id="83333"/>
    <lineage>
        <taxon>Bacteria</taxon>
        <taxon>Pseudomonadati</taxon>
        <taxon>Pseudomonadota</taxon>
        <taxon>Gammaproteobacteria</taxon>
        <taxon>Enterobacterales</taxon>
        <taxon>Enterobacteriaceae</taxon>
        <taxon>Escherichia</taxon>
    </lineage>
</organism>
<protein>
    <recommendedName>
        <fullName evidence="15">Replicative DNA helicase DnaB</fullName>
        <ecNumber evidence="6 11">5.6.2.3</ecNumber>
    </recommendedName>
    <alternativeName>
        <fullName evidence="17">DNA 5'-3' helicase DnaB</fullName>
    </alternativeName>
</protein>
<accession>P0ACB0</accession>
<accession>P03005</accession>
<accession>Q2M6Q2</accession>
<sequence>MAGNKPFNKQQAEPRERDPQVAGLKVPPHSIEAEQSVLGGLMLDNERWDDVAERVVADDFYTRPHRHIFTEMARLQESGSPIDLITLAESLERQGQLDSVGGFAYLAELSKNTPSAANISAYADIVRERAVVREMISVANEIAEAGFDPQGRTSEDLLDLAESRVFKIAESRANKDEGPKNIADVLDATVARIEQLFQQPHDGVTGVNTGYDDLNKKTAGLQPSDLIIVAARPSMGKTTFAMNLVENAAMLQDKPVLIFSLEMPSEQIMMRSLASLSRVDQTKIRTGQLDDEDWARISGTMGILLEKRNIYIDDSSGLTPTEVRSRARRIAREHGGIGLIMIDYLQLMRVPALSDNRTLEIAEISRSLKALAKELNVPVVALSQLNRSLEQRADKRPVNSDLRESGSIEQDADLIMFIYRDEVYHENSDLKGIAEIIIGKQRNGPIGTVRLTFNGQWSRFDNYAGPQYDDE</sequence>
<proteinExistence type="evidence at protein level"/>
<keyword id="KW-0002">3D-structure</keyword>
<keyword id="KW-0067">ATP-binding</keyword>
<keyword id="KW-0903">Direct protein sequencing</keyword>
<keyword id="KW-0235">DNA replication</keyword>
<keyword id="KW-0238">DNA-binding</keyword>
<keyword id="KW-0347">Helicase</keyword>
<keyword id="KW-0378">Hydrolase</keyword>
<keyword id="KW-0413">Isomerase</keyword>
<keyword id="KW-0547">Nucleotide-binding</keyword>
<keyword id="KW-0639">Primosome</keyword>
<keyword id="KW-1185">Reference proteome</keyword>
<keyword id="KW-0346">Stress response</keyword>
<name>DNAB_ECOLI</name>
<reference key="1">
    <citation type="journal article" date="1984" name="J. Biol. Chem.">
        <title>Nucleotide sequence of dnaB and the primary structure of the dnaB protein from Escherichia coli.</title>
        <authorList>
            <person name="Nakayama N."/>
            <person name="Arai N."/>
            <person name="Bond M.W."/>
            <person name="Kaziro Y."/>
            <person name="Arai K."/>
        </authorList>
    </citation>
    <scope>NUCLEOTIDE SEQUENCE [GENOMIC DNA]</scope>
    <scope>PROTEIN SEQUENCE OF 2-85; 173-215 AND 290-292</scope>
</reference>
<reference key="2">
    <citation type="journal article" date="1993" name="Nucleic Acids Res.">
        <title>Analysis of the Escherichia coli genome. IV. DNA sequence of the region from 89.2 to 92.8 minutes.</title>
        <authorList>
            <person name="Blattner F.R."/>
            <person name="Burland V.D."/>
            <person name="Plunkett G. III"/>
            <person name="Sofia H.J."/>
            <person name="Daniels D.L."/>
        </authorList>
    </citation>
    <scope>NUCLEOTIDE SEQUENCE [LARGE SCALE GENOMIC DNA]</scope>
    <source>
        <strain>K12 / MG1655 / ATCC 47076</strain>
    </source>
</reference>
<reference key="3">
    <citation type="journal article" date="1997" name="Science">
        <title>The complete genome sequence of Escherichia coli K-12.</title>
        <authorList>
            <person name="Blattner F.R."/>
            <person name="Plunkett G. III"/>
            <person name="Bloch C.A."/>
            <person name="Perna N.T."/>
            <person name="Burland V."/>
            <person name="Riley M."/>
            <person name="Collado-Vides J."/>
            <person name="Glasner J.D."/>
            <person name="Rode C.K."/>
            <person name="Mayhew G.F."/>
            <person name="Gregor J."/>
            <person name="Davis N.W."/>
            <person name="Kirkpatrick H.A."/>
            <person name="Goeden M.A."/>
            <person name="Rose D.J."/>
            <person name="Mau B."/>
            <person name="Shao Y."/>
        </authorList>
    </citation>
    <scope>NUCLEOTIDE SEQUENCE [LARGE SCALE GENOMIC DNA]</scope>
    <source>
        <strain>K12 / MG1655 / ATCC 47076</strain>
    </source>
</reference>
<reference key="4">
    <citation type="journal article" date="2006" name="Mol. Syst. Biol.">
        <title>Highly accurate genome sequences of Escherichia coli K-12 strains MG1655 and W3110.</title>
        <authorList>
            <person name="Hayashi K."/>
            <person name="Morooka N."/>
            <person name="Yamamoto Y."/>
            <person name="Fujita K."/>
            <person name="Isono K."/>
            <person name="Choi S."/>
            <person name="Ohtsubo E."/>
            <person name="Baba T."/>
            <person name="Wanner B.L."/>
            <person name="Mori H."/>
            <person name="Horiuchi T."/>
        </authorList>
    </citation>
    <scope>NUCLEOTIDE SEQUENCE [LARGE SCALE GENOMIC DNA]</scope>
    <source>
        <strain>K12 / W3110 / ATCC 27325 / DSM 5911</strain>
    </source>
</reference>
<reference key="5">
    <citation type="submission" date="1992-09" db="EMBL/GenBank/DDBJ databases">
        <title>E. coli homolog of zeta crystallin.</title>
        <authorList>
            <person name="Dixon N.E."/>
            <person name="Lilley P.E."/>
        </authorList>
    </citation>
    <scope>NUCLEOTIDE SEQUENCE [GENOMIC DNA] OF 1-157</scope>
    <source>
        <strain>K12</strain>
    </source>
</reference>
<reference key="6">
    <citation type="journal article" date="1981" name="Proc. Natl. Acad. Sci. U.S.A.">
        <title>Unique primed start of phage phi X174 DNA replication and mobility of the primosome in a direction opposite chain synthesis.</title>
        <authorList>
            <person name="Arai K."/>
            <person name="Kornberg A."/>
        </authorList>
    </citation>
    <scope>FUNCTION</scope>
    <scope>PRIMOSOME SUBUNITS</scope>
</reference>
<reference key="7">
    <citation type="journal article" date="1986" name="J. Biol. Chem.">
        <title>The Escherichia coli dnaB replication protein is a DNA helicase.</title>
        <authorList>
            <person name="LeBowitz J.H."/>
            <person name="McMacken R."/>
        </authorList>
    </citation>
    <scope>FUNCTION AS A 5'-3' DNA HELICASE</scope>
    <scope>CATALYTIC ACTIVITY</scope>
    <scope>ACTIVITY REGULATION</scope>
    <scope>DNA-BINDING</scope>
</reference>
<reference key="8">
    <citation type="journal article" date="1994" name="J. Biol. Chem.">
        <title>Oligomeric structure of Escherichia coli primary replicative helicase DnaB protein.</title>
        <authorList>
            <person name="Bujalowski W."/>
            <person name="Klonowska M.M."/>
            <person name="Jezewska M.J."/>
        </authorList>
    </citation>
    <scope>COFACTOR</scope>
    <scope>SUBUNIT</scope>
</reference>
<reference key="9">
    <citation type="journal article" date="1995" name="J. Bacteriol.">
        <title>Biochemical characterization of Escherichia coli temperature-sensitive dnaB mutants dnaB8, dnaB252, dnaB70, dnaB43, and dnaB454.</title>
        <authorList>
            <person name="Saluja D."/>
            <person name="Godson G.N."/>
        </authorList>
    </citation>
    <scope>FUNCTION AS A 5'-3' DNA HELICASE</scope>
    <scope>FUNCTION AS AN ATPASE</scope>
    <scope>FUNCTION IN PRIMER RNA SYNTHESIS</scope>
    <scope>CATALYTIC ACTIVITY</scope>
    <scope>SSDNA-BINDING</scope>
    <scope>MUTAGENESIS OF ALA-130; MET-242 AND GLY-299</scope>
</reference>
<reference key="10">
    <citation type="journal article" date="1996" name="J. Biol. Chem.">
        <title>The ordered assembly of the phiX174-type primosome. I. Isolation and identification of intermediate protein-DNA complexes.</title>
        <authorList>
            <person name="Ng J.Y."/>
            <person name="Marians K.J."/>
        </authorList>
    </citation>
    <scope>FUNCTION</scope>
    <scope>PRIMOSOME COMPLEX ASSEMBLY</scope>
</reference>
<reference key="11">
    <citation type="journal article" date="1996" name="J. Biol. Chem.">
        <title>The ordered assembly of the phiX174-type primosome. II. Preservation of primosome composition from assembly through replication.</title>
        <authorList>
            <person name="Ng J.Y."/>
            <person name="Marians K.J."/>
        </authorList>
    </citation>
    <scope>FUNCTION</scope>
    <scope>PRIMISOME COMPLEX ASSEMBLY</scope>
</reference>
<reference key="12">
    <citation type="journal article" date="1997" name="Electrophoresis">
        <title>Escherichia coli proteome analysis using the gene-protein database.</title>
        <authorList>
            <person name="VanBogelen R.A."/>
            <person name="Abshire K.Z."/>
            <person name="Moldover B."/>
            <person name="Olson E.R."/>
            <person name="Neidhardt F.C."/>
        </authorList>
    </citation>
    <scope>IDENTIFICATION BY 2D-GEL</scope>
</reference>
<reference key="13">
    <citation type="journal article" date="2009" name="Mol. Cell">
        <title>Hydroxyurea induces hydroxyl radical-mediated cell death in Escherichia coli.</title>
        <authorList>
            <person name="Davies B.W."/>
            <person name="Kohanski M.A."/>
            <person name="Simmons L.A."/>
            <person name="Winkler J.A."/>
            <person name="Collins J.J."/>
            <person name="Walker G.C."/>
        </authorList>
    </citation>
    <scope>INDUCTION BY HYDROXYUREA</scope>
    <source>
        <strain>K12 / MC4100 / ATCC 35695 / DSM 6574</strain>
    </source>
</reference>
<reference key="14">
    <citation type="journal article" date="2014" name="Elife">
        <title>Evolution of extreme resistance to ionizing radiation via genetic adaptation of DNA repair.</title>
        <authorList>
            <person name="Byrne R.T."/>
            <person name="Klingele A.J."/>
            <person name="Cabot E.L."/>
            <person name="Schackwitz W.S."/>
            <person name="Martin J.A."/>
            <person name="Martin J."/>
            <person name="Wang Z."/>
            <person name="Wood E.A."/>
            <person name="Pennacchio C."/>
            <person name="Pennacchio L.A."/>
            <person name="Perna N.T."/>
            <person name="Battista J.R."/>
            <person name="Cox M.M."/>
        </authorList>
    </citation>
    <scope>FUNCTION IN RADIATION RESISTANCE</scope>
    <scope>MUTAGENESIS OF PRO-81</scope>
    <source>
        <strain>K12</strain>
    </source>
</reference>
<reference key="15">
    <citation type="journal article" date="2016" name="J. Biol. Chem.">
        <title>Structure and Function of the PriC DNA Replication Restart Protein.</title>
        <authorList>
            <person name="Wessel S.R."/>
            <person name="Cornilescu C.C."/>
            <person name="Cornilescu G."/>
            <person name="Metz A."/>
            <person name="Leroux M."/>
            <person name="Hu K."/>
            <person name="Sandler S.J."/>
            <person name="Markley J.L."/>
            <person name="Keck J.L."/>
        </authorList>
    </citation>
    <scope>INTERACTION WITH PRIC</scope>
</reference>
<reference evidence="19" key="16">
    <citation type="journal article" date="1999" name="Structure">
        <title>NMR structure of the N-terminal domain of E. coli DnaB helicase: implications for structure rearrangements in the helicase hexamer.</title>
        <authorList>
            <person name="Weigelt J."/>
            <person name="Brown S.E."/>
            <person name="Miles C.S."/>
            <person name="Dixon N.E."/>
            <person name="Otting G."/>
        </authorList>
    </citation>
    <scope>STRUCTURE BY NMR OF 24-137</scope>
</reference>
<reference evidence="20" key="17">
    <citation type="journal article" date="2018" name="Elife">
        <title>Mechanisms of opening and closing of the bacterial replicative helicase.</title>
        <authorList>
            <person name="Chase J."/>
            <person name="Catalano A."/>
            <person name="Noble A.J."/>
            <person name="Eng E.T."/>
            <person name="Olinares P.D."/>
            <person name="Molloy K."/>
            <person name="Pakotiprapha D."/>
            <person name="Samuels M."/>
            <person name="Chait B."/>
            <person name="des Georges A."/>
            <person name="Jeruzalmi D."/>
        </authorList>
    </citation>
    <scope>STRUCTURE BY ELECTRON MICROSCOPY (4.10 ANGSTROMS) IN COMPLEX WITH LAMBDA REPLICATION PROTEIN P AND ADP</scope>
    <scope>SUBUNIT</scope>
    <scope>SUBUNIT (MICROBIAL INFECTION)</scope>
</reference>
<reference evidence="21 22" key="18">
    <citation type="journal article" date="2019" name="Mol. Cell">
        <title>Physical Basis for the Loading of a Bacterial Replicative Helicase onto DNA.</title>
        <authorList>
            <person name="Arias-Palomo E."/>
            <person name="Puri N."/>
            <person name="O'Shea Murray V.L."/>
            <person name="Yan Q."/>
            <person name="Berger J.M."/>
        </authorList>
    </citation>
    <scope>STRUCTURE BY ELECTRON MICROSCOPY (3.40 ANGSTROMS) OF THE HELIX LOADER IN COMPLEX WITH DNAC AND ATP ANALOG WITH AND WITHOUT SSDNA</scope>
    <scope>SUBUNIT</scope>
    <scope>DOMAIN</scope>
    <scope>ATP-BINDING</scope>
    <scope>SSDNA-BINDING</scope>
</reference>
<reference evidence="23 24 25 26" key="19">
    <citation type="submission" date="2021-12" db="PDB data bank">
        <title>Sequence of conformation changes of DnaB helicase during DNA unwinding and priming in Escherichia coli.</title>
        <authorList>
            <person name="Oakley A.J."/>
            <person name="Xu Z.Q."/>
        </authorList>
    </citation>
    <scope>STRUCTURE BY ELECTRON MICROSCOPY (4.20 ANGSTROMS)</scope>
</reference>
<gene>
    <name evidence="16" type="primary">dnaB</name>
    <name type="synonym">groP</name>
    <name type="synonym">grpA</name>
    <name type="ordered locus">b4052</name>
    <name type="ordered locus">JW4012</name>
</gene>